<comment type="function">
    <text evidence="1">Located at the top of the head of the 30S subunit, it contacts several helices of the 16S rRNA. In the 70S ribosome it contacts the 23S rRNA (bridge B1a) and protein L5 of the 50S subunit (bridge B1b), connecting the 2 subunits; these bridges are implicated in subunit movement. Contacts the tRNAs in the A and P-sites.</text>
</comment>
<comment type="subunit">
    <text evidence="1">Part of the 30S ribosomal subunit. Forms a loose heterodimer with protein S19. Forms two bridges to the 50S subunit in the 70S ribosome.</text>
</comment>
<comment type="similarity">
    <text evidence="1">Belongs to the universal ribosomal protein uS13 family.</text>
</comment>
<evidence type="ECO:0000255" key="1">
    <source>
        <dbReference type="HAMAP-Rule" id="MF_01315"/>
    </source>
</evidence>
<evidence type="ECO:0000256" key="2">
    <source>
        <dbReference type="SAM" id="MobiDB-lite"/>
    </source>
</evidence>
<evidence type="ECO:0000305" key="3"/>
<feature type="chain" id="PRO_1000141213" description="Small ribosomal subunit protein uS13">
    <location>
        <begin position="1"/>
        <end position="128"/>
    </location>
</feature>
<feature type="region of interest" description="Disordered" evidence="2">
    <location>
        <begin position="95"/>
        <end position="128"/>
    </location>
</feature>
<feature type="compositionally biased region" description="Basic residues" evidence="2">
    <location>
        <begin position="95"/>
        <end position="118"/>
    </location>
</feature>
<protein>
    <recommendedName>
        <fullName evidence="1">Small ribosomal subunit protein uS13</fullName>
    </recommendedName>
    <alternativeName>
        <fullName evidence="3">30S ribosomal protein S13</fullName>
    </alternativeName>
</protein>
<name>RS13_ANASK</name>
<organism>
    <name type="scientific">Anaeromyxobacter sp. (strain K)</name>
    <dbReference type="NCBI Taxonomy" id="447217"/>
    <lineage>
        <taxon>Bacteria</taxon>
        <taxon>Pseudomonadati</taxon>
        <taxon>Myxococcota</taxon>
        <taxon>Myxococcia</taxon>
        <taxon>Myxococcales</taxon>
        <taxon>Cystobacterineae</taxon>
        <taxon>Anaeromyxobacteraceae</taxon>
        <taxon>Anaeromyxobacter</taxon>
    </lineage>
</organism>
<gene>
    <name evidence="1" type="primary">rpsM</name>
    <name type="ordered locus">AnaeK_1957</name>
</gene>
<accession>B4UBC3</accession>
<keyword id="KW-0687">Ribonucleoprotein</keyword>
<keyword id="KW-0689">Ribosomal protein</keyword>
<keyword id="KW-0694">RNA-binding</keyword>
<keyword id="KW-0699">rRNA-binding</keyword>
<keyword id="KW-0820">tRNA-binding</keyword>
<sequence>MARIAGVDLPREKRIEVSLQYIYGIGKTSAKLILERANVSPVTRTKDLTDDEVRRIRETIEQNVKVEGDLRREISLNVKRLMDLGCYRGLRHRKGLPVRGQRTHTNARTRKGPKKGLVRKAAAPAPKA</sequence>
<reference key="1">
    <citation type="submission" date="2008-08" db="EMBL/GenBank/DDBJ databases">
        <title>Complete sequence of Anaeromyxobacter sp. K.</title>
        <authorList>
            <consortium name="US DOE Joint Genome Institute"/>
            <person name="Lucas S."/>
            <person name="Copeland A."/>
            <person name="Lapidus A."/>
            <person name="Glavina del Rio T."/>
            <person name="Dalin E."/>
            <person name="Tice H."/>
            <person name="Bruce D."/>
            <person name="Goodwin L."/>
            <person name="Pitluck S."/>
            <person name="Saunders E."/>
            <person name="Brettin T."/>
            <person name="Detter J.C."/>
            <person name="Han C."/>
            <person name="Larimer F."/>
            <person name="Land M."/>
            <person name="Hauser L."/>
            <person name="Kyrpides N."/>
            <person name="Ovchinnikiva G."/>
            <person name="Beliaev A."/>
        </authorList>
    </citation>
    <scope>NUCLEOTIDE SEQUENCE [LARGE SCALE GENOMIC DNA]</scope>
    <source>
        <strain>K</strain>
    </source>
</reference>
<dbReference type="EMBL" id="CP001131">
    <property type="protein sequence ID" value="ACG73185.1"/>
    <property type="molecule type" value="Genomic_DNA"/>
</dbReference>
<dbReference type="RefSeq" id="WP_011420976.1">
    <property type="nucleotide sequence ID" value="NC_011145.1"/>
</dbReference>
<dbReference type="SMR" id="B4UBC3"/>
<dbReference type="KEGG" id="ank:AnaeK_1957"/>
<dbReference type="HOGENOM" id="CLU_103849_1_2_7"/>
<dbReference type="OrthoDB" id="9803610at2"/>
<dbReference type="Proteomes" id="UP000001871">
    <property type="component" value="Chromosome"/>
</dbReference>
<dbReference type="GO" id="GO:0005829">
    <property type="term" value="C:cytosol"/>
    <property type="evidence" value="ECO:0007669"/>
    <property type="project" value="TreeGrafter"/>
</dbReference>
<dbReference type="GO" id="GO:0015935">
    <property type="term" value="C:small ribosomal subunit"/>
    <property type="evidence" value="ECO:0007669"/>
    <property type="project" value="TreeGrafter"/>
</dbReference>
<dbReference type="GO" id="GO:0019843">
    <property type="term" value="F:rRNA binding"/>
    <property type="evidence" value="ECO:0007669"/>
    <property type="project" value="UniProtKB-UniRule"/>
</dbReference>
<dbReference type="GO" id="GO:0003735">
    <property type="term" value="F:structural constituent of ribosome"/>
    <property type="evidence" value="ECO:0007669"/>
    <property type="project" value="InterPro"/>
</dbReference>
<dbReference type="GO" id="GO:0000049">
    <property type="term" value="F:tRNA binding"/>
    <property type="evidence" value="ECO:0007669"/>
    <property type="project" value="UniProtKB-UniRule"/>
</dbReference>
<dbReference type="GO" id="GO:0006412">
    <property type="term" value="P:translation"/>
    <property type="evidence" value="ECO:0007669"/>
    <property type="project" value="UniProtKB-UniRule"/>
</dbReference>
<dbReference type="FunFam" id="1.10.8.50:FF:000001">
    <property type="entry name" value="30S ribosomal protein S13"/>
    <property type="match status" value="1"/>
</dbReference>
<dbReference type="FunFam" id="4.10.910.10:FF:000001">
    <property type="entry name" value="30S ribosomal protein S13"/>
    <property type="match status" value="1"/>
</dbReference>
<dbReference type="Gene3D" id="1.10.8.50">
    <property type="match status" value="1"/>
</dbReference>
<dbReference type="Gene3D" id="4.10.910.10">
    <property type="entry name" value="30s ribosomal protein s13, domain 2"/>
    <property type="match status" value="1"/>
</dbReference>
<dbReference type="HAMAP" id="MF_01315">
    <property type="entry name" value="Ribosomal_uS13"/>
    <property type="match status" value="1"/>
</dbReference>
<dbReference type="InterPro" id="IPR027437">
    <property type="entry name" value="Rbsml_uS13_C"/>
</dbReference>
<dbReference type="InterPro" id="IPR001892">
    <property type="entry name" value="Ribosomal_uS13"/>
</dbReference>
<dbReference type="InterPro" id="IPR010979">
    <property type="entry name" value="Ribosomal_uS13-like_H2TH"/>
</dbReference>
<dbReference type="InterPro" id="IPR019980">
    <property type="entry name" value="Ribosomal_uS13_bac-type"/>
</dbReference>
<dbReference type="InterPro" id="IPR018269">
    <property type="entry name" value="Ribosomal_uS13_CS"/>
</dbReference>
<dbReference type="NCBIfam" id="TIGR03631">
    <property type="entry name" value="uS13_bact"/>
    <property type="match status" value="1"/>
</dbReference>
<dbReference type="PANTHER" id="PTHR10871">
    <property type="entry name" value="30S RIBOSOMAL PROTEIN S13/40S RIBOSOMAL PROTEIN S18"/>
    <property type="match status" value="1"/>
</dbReference>
<dbReference type="PANTHER" id="PTHR10871:SF1">
    <property type="entry name" value="SMALL RIBOSOMAL SUBUNIT PROTEIN US13M"/>
    <property type="match status" value="1"/>
</dbReference>
<dbReference type="Pfam" id="PF00416">
    <property type="entry name" value="Ribosomal_S13"/>
    <property type="match status" value="1"/>
</dbReference>
<dbReference type="PIRSF" id="PIRSF002134">
    <property type="entry name" value="Ribosomal_S13"/>
    <property type="match status" value="1"/>
</dbReference>
<dbReference type="SUPFAM" id="SSF46946">
    <property type="entry name" value="S13-like H2TH domain"/>
    <property type="match status" value="1"/>
</dbReference>
<dbReference type="PROSITE" id="PS00646">
    <property type="entry name" value="RIBOSOMAL_S13_1"/>
    <property type="match status" value="1"/>
</dbReference>
<dbReference type="PROSITE" id="PS50159">
    <property type="entry name" value="RIBOSOMAL_S13_2"/>
    <property type="match status" value="1"/>
</dbReference>
<proteinExistence type="inferred from homology"/>